<dbReference type="EC" id="7.6.2.-" evidence="1"/>
<dbReference type="EMBL" id="CP000094">
    <property type="protein sequence ID" value="ABA73958.1"/>
    <property type="molecule type" value="Genomic_DNA"/>
</dbReference>
<dbReference type="RefSeq" id="WP_011333643.1">
    <property type="nucleotide sequence ID" value="NC_007492.2"/>
</dbReference>
<dbReference type="SMR" id="Q3KE48"/>
<dbReference type="KEGG" id="pfo:Pfl01_2215"/>
<dbReference type="eggNOG" id="COG0577">
    <property type="taxonomic scope" value="Bacteria"/>
</dbReference>
<dbReference type="eggNOG" id="COG1136">
    <property type="taxonomic scope" value="Bacteria"/>
</dbReference>
<dbReference type="HOGENOM" id="CLU_000604_78_1_6"/>
<dbReference type="Proteomes" id="UP000002704">
    <property type="component" value="Chromosome"/>
</dbReference>
<dbReference type="GO" id="GO:0005886">
    <property type="term" value="C:plasma membrane"/>
    <property type="evidence" value="ECO:0007669"/>
    <property type="project" value="UniProtKB-SubCell"/>
</dbReference>
<dbReference type="GO" id="GO:0005524">
    <property type="term" value="F:ATP binding"/>
    <property type="evidence" value="ECO:0007669"/>
    <property type="project" value="UniProtKB-KW"/>
</dbReference>
<dbReference type="GO" id="GO:0016887">
    <property type="term" value="F:ATP hydrolysis activity"/>
    <property type="evidence" value="ECO:0007669"/>
    <property type="project" value="InterPro"/>
</dbReference>
<dbReference type="GO" id="GO:0022857">
    <property type="term" value="F:transmembrane transporter activity"/>
    <property type="evidence" value="ECO:0007669"/>
    <property type="project" value="TreeGrafter"/>
</dbReference>
<dbReference type="CDD" id="cd03255">
    <property type="entry name" value="ABC_MJ0796_LolCDE_FtsE"/>
    <property type="match status" value="1"/>
</dbReference>
<dbReference type="FunFam" id="3.40.50.300:FF:000032">
    <property type="entry name" value="Export ABC transporter ATP-binding protein"/>
    <property type="match status" value="1"/>
</dbReference>
<dbReference type="Gene3D" id="3.40.50.300">
    <property type="entry name" value="P-loop containing nucleotide triphosphate hydrolases"/>
    <property type="match status" value="1"/>
</dbReference>
<dbReference type="InterPro" id="IPR003593">
    <property type="entry name" value="AAA+_ATPase"/>
</dbReference>
<dbReference type="InterPro" id="IPR003838">
    <property type="entry name" value="ABC3_permease_C"/>
</dbReference>
<dbReference type="InterPro" id="IPR003439">
    <property type="entry name" value="ABC_transporter-like_ATP-bd"/>
</dbReference>
<dbReference type="InterPro" id="IPR017871">
    <property type="entry name" value="ABC_transporter-like_CS"/>
</dbReference>
<dbReference type="InterPro" id="IPR017911">
    <property type="entry name" value="MacB-like_ATP-bd"/>
</dbReference>
<dbReference type="InterPro" id="IPR025857">
    <property type="entry name" value="MacB_PCD"/>
</dbReference>
<dbReference type="InterPro" id="IPR050250">
    <property type="entry name" value="Macrolide_Exporter_MacB"/>
</dbReference>
<dbReference type="InterPro" id="IPR027417">
    <property type="entry name" value="P-loop_NTPase"/>
</dbReference>
<dbReference type="PANTHER" id="PTHR30572:SF7">
    <property type="entry name" value="MACROLIDE EXPORT ATP-BINDING_PERMEASE PROTEIN MACB"/>
    <property type="match status" value="1"/>
</dbReference>
<dbReference type="PANTHER" id="PTHR30572">
    <property type="entry name" value="MEMBRANE COMPONENT OF TRANSPORTER-RELATED"/>
    <property type="match status" value="1"/>
</dbReference>
<dbReference type="Pfam" id="PF00005">
    <property type="entry name" value="ABC_tran"/>
    <property type="match status" value="1"/>
</dbReference>
<dbReference type="Pfam" id="PF02687">
    <property type="entry name" value="FtsX"/>
    <property type="match status" value="1"/>
</dbReference>
<dbReference type="Pfam" id="PF12704">
    <property type="entry name" value="MacB_PCD"/>
    <property type="match status" value="1"/>
</dbReference>
<dbReference type="SMART" id="SM00382">
    <property type="entry name" value="AAA"/>
    <property type="match status" value="1"/>
</dbReference>
<dbReference type="SUPFAM" id="SSF52540">
    <property type="entry name" value="P-loop containing nucleoside triphosphate hydrolases"/>
    <property type="match status" value="1"/>
</dbReference>
<dbReference type="PROSITE" id="PS00211">
    <property type="entry name" value="ABC_TRANSPORTER_1"/>
    <property type="match status" value="1"/>
</dbReference>
<dbReference type="PROSITE" id="PS50893">
    <property type="entry name" value="ABC_TRANSPORTER_2"/>
    <property type="match status" value="1"/>
</dbReference>
<dbReference type="PROSITE" id="PS51267">
    <property type="entry name" value="MACB"/>
    <property type="match status" value="1"/>
</dbReference>
<gene>
    <name evidence="5" type="ordered locus">Pfl01_2215</name>
</gene>
<proteinExistence type="inferred from homology"/>
<keyword id="KW-0067">ATP-binding</keyword>
<keyword id="KW-0997">Cell inner membrane</keyword>
<keyword id="KW-1003">Cell membrane</keyword>
<keyword id="KW-0472">Membrane</keyword>
<keyword id="KW-0547">Nucleotide-binding</keyword>
<keyword id="KW-1278">Translocase</keyword>
<keyword id="KW-0812">Transmembrane</keyword>
<keyword id="KW-1133">Transmembrane helix</keyword>
<keyword id="KW-0813">Transport</keyword>
<name>MACBH_PSEPF</name>
<organism>
    <name type="scientific">Pseudomonas fluorescens (strain Pf0-1)</name>
    <dbReference type="NCBI Taxonomy" id="205922"/>
    <lineage>
        <taxon>Bacteria</taxon>
        <taxon>Pseudomonadati</taxon>
        <taxon>Pseudomonadota</taxon>
        <taxon>Gammaproteobacteria</taxon>
        <taxon>Pseudomonadales</taxon>
        <taxon>Pseudomonadaceae</taxon>
        <taxon>Pseudomonas</taxon>
    </lineage>
</organism>
<feature type="chain" id="PRO_0000269960" description="Probable export ATP-binding/permease protein Pfl01_2215">
    <location>
        <begin position="1"/>
        <end position="651"/>
    </location>
</feature>
<feature type="transmembrane region" description="Helical" evidence="2">
    <location>
        <begin position="250"/>
        <end position="270"/>
    </location>
</feature>
<feature type="transmembrane region" description="Helical" evidence="2">
    <location>
        <begin position="276"/>
        <end position="296"/>
    </location>
</feature>
<feature type="transmembrane region" description="Helical" evidence="2">
    <location>
        <begin position="524"/>
        <end position="544"/>
    </location>
</feature>
<feature type="transmembrane region" description="Helical" evidence="2">
    <location>
        <begin position="585"/>
        <end position="605"/>
    </location>
</feature>
<feature type="transmembrane region" description="Helical" evidence="2">
    <location>
        <begin position="614"/>
        <end position="634"/>
    </location>
</feature>
<feature type="domain" description="ABC transporter" evidence="3">
    <location>
        <begin position="6"/>
        <end position="244"/>
    </location>
</feature>
<feature type="binding site" evidence="3">
    <location>
        <begin position="42"/>
        <end position="49"/>
    </location>
    <ligand>
        <name>ATP</name>
        <dbReference type="ChEBI" id="CHEBI:30616"/>
    </ligand>
</feature>
<accession>Q3KE48</accession>
<reference key="1">
    <citation type="journal article" date="2009" name="Genome Biol.">
        <title>Genomic and genetic analyses of diversity and plant interactions of Pseudomonas fluorescens.</title>
        <authorList>
            <person name="Silby M.W."/>
            <person name="Cerdeno-Tarraga A.M."/>
            <person name="Vernikos G.S."/>
            <person name="Giddens S.R."/>
            <person name="Jackson R.W."/>
            <person name="Preston G.M."/>
            <person name="Zhang X.-X."/>
            <person name="Moon C.D."/>
            <person name="Gehrig S.M."/>
            <person name="Godfrey S.A.C."/>
            <person name="Knight C.G."/>
            <person name="Malone J.G."/>
            <person name="Robinson Z."/>
            <person name="Spiers A.J."/>
            <person name="Harris S."/>
            <person name="Challis G.L."/>
            <person name="Yaxley A.M."/>
            <person name="Harris D."/>
            <person name="Seeger K."/>
            <person name="Murphy L."/>
            <person name="Rutter S."/>
            <person name="Squares R."/>
            <person name="Quail M.A."/>
            <person name="Saunders E."/>
            <person name="Mavromatis K."/>
            <person name="Brettin T.S."/>
            <person name="Bentley S.D."/>
            <person name="Hothersall J."/>
            <person name="Stephens E."/>
            <person name="Thomas C.M."/>
            <person name="Parkhill J."/>
            <person name="Levy S.B."/>
            <person name="Rainey P.B."/>
            <person name="Thomson N.R."/>
        </authorList>
    </citation>
    <scope>NUCLEOTIDE SEQUENCE [LARGE SCALE GENOMIC DNA]</scope>
    <source>
        <strain>Pf0-1</strain>
    </source>
</reference>
<evidence type="ECO:0000250" key="1">
    <source>
        <dbReference type="UniProtKB" id="P75831"/>
    </source>
</evidence>
<evidence type="ECO:0000255" key="2"/>
<evidence type="ECO:0000255" key="3">
    <source>
        <dbReference type="PROSITE-ProRule" id="PRU00434"/>
    </source>
</evidence>
<evidence type="ECO:0000305" key="4"/>
<evidence type="ECO:0000312" key="5">
    <source>
        <dbReference type="EMBL" id="ABA73958.1"/>
    </source>
</evidence>
<comment type="function">
    <text evidence="1">Probably part of a tripartite efflux system.</text>
</comment>
<comment type="subunit">
    <text evidence="1">Probably part of a tripartite efflux system, which is composed of an inner membrane transporter, a periplasmic membrane fusion protein, and an outer membrane component.</text>
</comment>
<comment type="subcellular location">
    <subcellularLocation>
        <location evidence="1">Cell inner membrane</location>
        <topology evidence="2">Multi-pass membrane protein</topology>
    </subcellularLocation>
</comment>
<comment type="similarity">
    <text evidence="4">Belongs to the ABC transporter superfamily. Macrolide exporter (TC 3.A.1.122) family.</text>
</comment>
<sequence>MSEPLLQLTGISRSFTAGDREFLALKNIDLTIHAGEMVAIIGASGSGKSTLMNILGCLDYATAGSYRINGRETRDLDNQALAELRRDYFGFIFQRYHLLPHLSAVHNVEMPAIYAGTPEPQRHARARELLARLGLEGHLTHRPSQLSGGQQQRVSIARALMNGGEVILADEPTGALDTTSGKEVMRILLELHAAGHTVILVTHDPKVAANAERIIEVSDGEILSDRRNERDTAALSNEDAVPKSTAARRLVASLGLFKEAFNMAWVALISHRMRTLLTMLGIVIGITSVVSISAIGEGAKRYVLKDIQAIGSNTIDIYSGTSFGDSRSAAIETLVPADVTALNQLYYVDSATPVVGRNLLLRYRNIDLDAQVNGVSDLYFQVRGIKMESGIPFSESDARRQAQVVVIDHNTRHRLFGEGVDPLGQVILIGNLPCTVIGVAAENKNIFSSSKSLNVWVPYETAAGRLLGQRYLDSISVRIKDGQPSKVVEDNVNKLMLQRHGTKDFFTNNLDSVMQTVQKTSRSLALLLSLIAVISLVVGGIGVMNIMLVSVTERTREIGIRMAVGARQSDIRQQFLVEAVMVCLLGGAIGISLSYAIGHLFSLFIKEWEMVFSLTSVLTAVICSTLIGIVFGFVPARNASRLDPIEALARD</sequence>
<protein>
    <recommendedName>
        <fullName evidence="4">Probable export ATP-binding/permease protein Pfl01_2215</fullName>
        <ecNumber evidence="1">7.6.2.-</ecNumber>
    </recommendedName>
</protein>